<accession>C5CAH0</accession>
<evidence type="ECO:0000255" key="1">
    <source>
        <dbReference type="HAMAP-Rule" id="MF_00605"/>
    </source>
</evidence>
<evidence type="ECO:0000256" key="2">
    <source>
        <dbReference type="SAM" id="MobiDB-lite"/>
    </source>
</evidence>
<comment type="function">
    <text evidence="1">Specifically methylates guanosine-37 in various tRNAs.</text>
</comment>
<comment type="catalytic activity">
    <reaction evidence="1">
        <text>guanosine(37) in tRNA + S-adenosyl-L-methionine = N(1)-methylguanosine(37) in tRNA + S-adenosyl-L-homocysteine + H(+)</text>
        <dbReference type="Rhea" id="RHEA:36899"/>
        <dbReference type="Rhea" id="RHEA-COMP:10145"/>
        <dbReference type="Rhea" id="RHEA-COMP:10147"/>
        <dbReference type="ChEBI" id="CHEBI:15378"/>
        <dbReference type="ChEBI" id="CHEBI:57856"/>
        <dbReference type="ChEBI" id="CHEBI:59789"/>
        <dbReference type="ChEBI" id="CHEBI:73542"/>
        <dbReference type="ChEBI" id="CHEBI:74269"/>
        <dbReference type="EC" id="2.1.1.228"/>
    </reaction>
</comment>
<comment type="subunit">
    <text evidence="1">Homodimer.</text>
</comment>
<comment type="subcellular location">
    <subcellularLocation>
        <location evidence="1">Cytoplasm</location>
    </subcellularLocation>
</comment>
<comment type="similarity">
    <text evidence="1">Belongs to the RNA methyltransferase TrmD family.</text>
</comment>
<protein>
    <recommendedName>
        <fullName evidence="1">tRNA (guanine-N(1)-)-methyltransferase</fullName>
        <ecNumber evidence="1">2.1.1.228</ecNumber>
    </recommendedName>
    <alternativeName>
        <fullName evidence="1">M1G-methyltransferase</fullName>
    </alternativeName>
    <alternativeName>
        <fullName evidence="1">tRNA [GM37] methyltransferase</fullName>
    </alternativeName>
</protein>
<name>TRMD_MICLC</name>
<proteinExistence type="inferred from homology"/>
<feature type="chain" id="PRO_1000212229" description="tRNA (guanine-N(1)-)-methyltransferase">
    <location>
        <begin position="1"/>
        <end position="248"/>
    </location>
</feature>
<feature type="region of interest" description="Disordered" evidence="2">
    <location>
        <begin position="224"/>
        <end position="248"/>
    </location>
</feature>
<feature type="compositionally biased region" description="Basic and acidic residues" evidence="2">
    <location>
        <begin position="227"/>
        <end position="239"/>
    </location>
</feature>
<feature type="binding site" evidence="1">
    <location>
        <position position="126"/>
    </location>
    <ligand>
        <name>S-adenosyl-L-methionine</name>
        <dbReference type="ChEBI" id="CHEBI:59789"/>
    </ligand>
</feature>
<feature type="binding site" evidence="1">
    <location>
        <begin position="150"/>
        <end position="155"/>
    </location>
    <ligand>
        <name>S-adenosyl-L-methionine</name>
        <dbReference type="ChEBI" id="CHEBI:59789"/>
    </ligand>
</feature>
<keyword id="KW-0963">Cytoplasm</keyword>
<keyword id="KW-0489">Methyltransferase</keyword>
<keyword id="KW-1185">Reference proteome</keyword>
<keyword id="KW-0949">S-adenosyl-L-methionine</keyword>
<keyword id="KW-0808">Transferase</keyword>
<keyword id="KW-0819">tRNA processing</keyword>
<gene>
    <name evidence="1" type="primary">trmD</name>
    <name type="ordered locus">Mlut_09180</name>
</gene>
<reference key="1">
    <citation type="journal article" date="2010" name="J. Bacteriol.">
        <title>Genome sequence of the Fleming strain of Micrococcus luteus, a simple free-living actinobacterium.</title>
        <authorList>
            <person name="Young M."/>
            <person name="Artsatbanov V."/>
            <person name="Beller H.R."/>
            <person name="Chandra G."/>
            <person name="Chater K.F."/>
            <person name="Dover L.G."/>
            <person name="Goh E.B."/>
            <person name="Kahan T."/>
            <person name="Kaprelyants A.S."/>
            <person name="Kyrpides N."/>
            <person name="Lapidus A."/>
            <person name="Lowry S.R."/>
            <person name="Lykidis A."/>
            <person name="Mahillon J."/>
            <person name="Markowitz V."/>
            <person name="Mavromatis K."/>
            <person name="Mukamolova G.V."/>
            <person name="Oren A."/>
            <person name="Rokem J.S."/>
            <person name="Smith M.C."/>
            <person name="Young D.I."/>
            <person name="Greenblatt C.L."/>
        </authorList>
    </citation>
    <scope>NUCLEOTIDE SEQUENCE [LARGE SCALE GENOMIC DNA]</scope>
    <source>
        <strain>ATCC 4698 / DSM 20030 / JCM 1464 / CCM 169 / CCUG 5858 / IAM 1056 / NBRC 3333 / NCIMB 9278 / NCTC 2665 / VKM Ac-2230</strain>
    </source>
</reference>
<organism>
    <name type="scientific">Micrococcus luteus (strain ATCC 4698 / DSM 20030 / JCM 1464 / CCM 169 / CCUG 5858 / IAM 1056 / NBRC 3333 / NCIMB 9278 / NCTC 2665 / VKM Ac-2230)</name>
    <name type="common">Micrococcus lysodeikticus</name>
    <dbReference type="NCBI Taxonomy" id="465515"/>
    <lineage>
        <taxon>Bacteria</taxon>
        <taxon>Bacillati</taxon>
        <taxon>Actinomycetota</taxon>
        <taxon>Actinomycetes</taxon>
        <taxon>Micrococcales</taxon>
        <taxon>Micrococcaceae</taxon>
        <taxon>Micrococcus</taxon>
    </lineage>
</organism>
<dbReference type="EC" id="2.1.1.228" evidence="1"/>
<dbReference type="EMBL" id="CP001628">
    <property type="protein sequence ID" value="ACS30439.1"/>
    <property type="molecule type" value="Genomic_DNA"/>
</dbReference>
<dbReference type="RefSeq" id="WP_010078918.1">
    <property type="nucleotide sequence ID" value="NC_012803.1"/>
</dbReference>
<dbReference type="SMR" id="C5CAH0"/>
<dbReference type="STRING" id="465515.Mlut_09180"/>
<dbReference type="EnsemblBacteria" id="ACS30439">
    <property type="protein sequence ID" value="ACS30439"/>
    <property type="gene ID" value="Mlut_09180"/>
</dbReference>
<dbReference type="GeneID" id="93345080"/>
<dbReference type="KEGG" id="mlu:Mlut_09180"/>
<dbReference type="PATRIC" id="fig|465515.4.peg.879"/>
<dbReference type="eggNOG" id="COG0336">
    <property type="taxonomic scope" value="Bacteria"/>
</dbReference>
<dbReference type="HOGENOM" id="CLU_047363_0_0_11"/>
<dbReference type="Proteomes" id="UP000000738">
    <property type="component" value="Chromosome"/>
</dbReference>
<dbReference type="GO" id="GO:0005829">
    <property type="term" value="C:cytosol"/>
    <property type="evidence" value="ECO:0007669"/>
    <property type="project" value="TreeGrafter"/>
</dbReference>
<dbReference type="GO" id="GO:0052906">
    <property type="term" value="F:tRNA (guanine(37)-N1)-methyltransferase activity"/>
    <property type="evidence" value="ECO:0007669"/>
    <property type="project" value="UniProtKB-UniRule"/>
</dbReference>
<dbReference type="GO" id="GO:0002939">
    <property type="term" value="P:tRNA N1-guanine methylation"/>
    <property type="evidence" value="ECO:0007669"/>
    <property type="project" value="TreeGrafter"/>
</dbReference>
<dbReference type="CDD" id="cd18080">
    <property type="entry name" value="TrmD-like"/>
    <property type="match status" value="1"/>
</dbReference>
<dbReference type="FunFam" id="3.40.1280.10:FF:000001">
    <property type="entry name" value="tRNA (guanine-N(1)-)-methyltransferase"/>
    <property type="match status" value="1"/>
</dbReference>
<dbReference type="Gene3D" id="3.40.1280.10">
    <property type="match status" value="1"/>
</dbReference>
<dbReference type="Gene3D" id="1.10.1270.20">
    <property type="entry name" value="tRNA(m1g37)methyltransferase, domain 2"/>
    <property type="match status" value="1"/>
</dbReference>
<dbReference type="HAMAP" id="MF_00605">
    <property type="entry name" value="TrmD"/>
    <property type="match status" value="1"/>
</dbReference>
<dbReference type="InterPro" id="IPR029028">
    <property type="entry name" value="Alpha/beta_knot_MTases"/>
</dbReference>
<dbReference type="InterPro" id="IPR023148">
    <property type="entry name" value="tRNA_m1G_MeTrfase_C_sf"/>
</dbReference>
<dbReference type="InterPro" id="IPR002649">
    <property type="entry name" value="tRNA_m1G_MeTrfase_TrmD"/>
</dbReference>
<dbReference type="InterPro" id="IPR029026">
    <property type="entry name" value="tRNA_m1G_MTases_N"/>
</dbReference>
<dbReference type="InterPro" id="IPR016009">
    <property type="entry name" value="tRNA_MeTrfase_TRMD/TRM10"/>
</dbReference>
<dbReference type="NCBIfam" id="NF000648">
    <property type="entry name" value="PRK00026.1"/>
    <property type="match status" value="1"/>
</dbReference>
<dbReference type="NCBIfam" id="TIGR00088">
    <property type="entry name" value="trmD"/>
    <property type="match status" value="1"/>
</dbReference>
<dbReference type="PANTHER" id="PTHR46417">
    <property type="entry name" value="TRNA (GUANINE-N(1)-)-METHYLTRANSFERASE"/>
    <property type="match status" value="1"/>
</dbReference>
<dbReference type="PANTHER" id="PTHR46417:SF1">
    <property type="entry name" value="TRNA (GUANINE-N(1)-)-METHYLTRANSFERASE"/>
    <property type="match status" value="1"/>
</dbReference>
<dbReference type="Pfam" id="PF01746">
    <property type="entry name" value="tRNA_m1G_MT"/>
    <property type="match status" value="1"/>
</dbReference>
<dbReference type="PIRSF" id="PIRSF000386">
    <property type="entry name" value="tRNA_mtase"/>
    <property type="match status" value="1"/>
</dbReference>
<dbReference type="SUPFAM" id="SSF75217">
    <property type="entry name" value="alpha/beta knot"/>
    <property type="match status" value="1"/>
</dbReference>
<sequence length="248" mass="27281">MRFDVVTIFPEYLSVLDVSLLGRARREGLVDVHVHDLRDFTVDRHRTVDDTPYGGGAGMVMKPEPWALALEHVAAQGPAAPAPADPASAEPGDRPVLLVPTPSGERFTQRFARELAGREHVAIACGRYEGIDERVFGWAEELFEVRLVSLGDYVLNGGEVAALAMIEAVGRLVPGVVGNPASLVEESHEDGLLEYPVYTKPADWRGRAVPPVLLSGDHGKVAAWRRTQQEERTRERRPDLWAAFDSED</sequence>